<evidence type="ECO:0000255" key="1">
    <source>
        <dbReference type="HAMAP-Rule" id="MF_01152"/>
    </source>
</evidence>
<proteinExistence type="inferred from homology"/>
<feature type="chain" id="PRO_0000070842" description="Chaperone protein DnaJ 1">
    <location>
        <begin position="1"/>
        <end position="384"/>
    </location>
</feature>
<feature type="domain" description="J" evidence="1">
    <location>
        <begin position="4"/>
        <end position="68"/>
    </location>
</feature>
<feature type="repeat" description="CXXCXGXG motif">
    <location>
        <begin position="146"/>
        <end position="153"/>
    </location>
</feature>
<feature type="repeat" description="CXXCXGXG motif">
    <location>
        <begin position="163"/>
        <end position="170"/>
    </location>
</feature>
<feature type="repeat" description="CXXCXGXG motif">
    <location>
        <begin position="189"/>
        <end position="196"/>
    </location>
</feature>
<feature type="repeat" description="CXXCXGXG motif">
    <location>
        <begin position="203"/>
        <end position="210"/>
    </location>
</feature>
<feature type="zinc finger region" description="CR-type" evidence="1">
    <location>
        <begin position="133"/>
        <end position="215"/>
    </location>
</feature>
<feature type="binding site" evidence="1">
    <location>
        <position position="146"/>
    </location>
    <ligand>
        <name>Zn(2+)</name>
        <dbReference type="ChEBI" id="CHEBI:29105"/>
        <label>1</label>
    </ligand>
</feature>
<feature type="binding site" evidence="1">
    <location>
        <position position="149"/>
    </location>
    <ligand>
        <name>Zn(2+)</name>
        <dbReference type="ChEBI" id="CHEBI:29105"/>
        <label>1</label>
    </ligand>
</feature>
<feature type="binding site" evidence="1">
    <location>
        <position position="163"/>
    </location>
    <ligand>
        <name>Zn(2+)</name>
        <dbReference type="ChEBI" id="CHEBI:29105"/>
        <label>2</label>
    </ligand>
</feature>
<feature type="binding site" evidence="1">
    <location>
        <position position="166"/>
    </location>
    <ligand>
        <name>Zn(2+)</name>
        <dbReference type="ChEBI" id="CHEBI:29105"/>
        <label>2</label>
    </ligand>
</feature>
<feature type="binding site" evidence="1">
    <location>
        <position position="189"/>
    </location>
    <ligand>
        <name>Zn(2+)</name>
        <dbReference type="ChEBI" id="CHEBI:29105"/>
        <label>2</label>
    </ligand>
</feature>
<feature type="binding site" evidence="1">
    <location>
        <position position="192"/>
    </location>
    <ligand>
        <name>Zn(2+)</name>
        <dbReference type="ChEBI" id="CHEBI:29105"/>
        <label>2</label>
    </ligand>
</feature>
<feature type="binding site" evidence="1">
    <location>
        <position position="203"/>
    </location>
    <ligand>
        <name>Zn(2+)</name>
        <dbReference type="ChEBI" id="CHEBI:29105"/>
        <label>1</label>
    </ligand>
</feature>
<feature type="binding site" evidence="1">
    <location>
        <position position="206"/>
    </location>
    <ligand>
        <name>Zn(2+)</name>
        <dbReference type="ChEBI" id="CHEBI:29105"/>
        <label>1</label>
    </ligand>
</feature>
<accession>Q5YZX0</accession>
<keyword id="KW-0143">Chaperone</keyword>
<keyword id="KW-0963">Cytoplasm</keyword>
<keyword id="KW-0235">DNA replication</keyword>
<keyword id="KW-0479">Metal-binding</keyword>
<keyword id="KW-1185">Reference proteome</keyword>
<keyword id="KW-0677">Repeat</keyword>
<keyword id="KW-0346">Stress response</keyword>
<keyword id="KW-0862">Zinc</keyword>
<keyword id="KW-0863">Zinc-finger</keyword>
<comment type="function">
    <text evidence="1">Participates actively in the response to hyperosmotic and heat shock by preventing the aggregation of stress-denatured proteins and by disaggregating proteins, also in an autonomous, DnaK-independent fashion. Unfolded proteins bind initially to DnaJ; upon interaction with the DnaJ-bound protein, DnaK hydrolyzes its bound ATP, resulting in the formation of a stable complex. GrpE releases ADP from DnaK; ATP binding to DnaK triggers the release of the substrate protein, thus completing the reaction cycle. Several rounds of ATP-dependent interactions between DnaJ, DnaK and GrpE are required for fully efficient folding. Also involved, together with DnaK and GrpE, in the DNA replication of plasmids through activation of initiation proteins.</text>
</comment>
<comment type="cofactor">
    <cofactor evidence="1">
        <name>Zn(2+)</name>
        <dbReference type="ChEBI" id="CHEBI:29105"/>
    </cofactor>
    <text evidence="1">Binds 2 Zn(2+) ions per monomer.</text>
</comment>
<comment type="subunit">
    <text evidence="1">Homodimer.</text>
</comment>
<comment type="subcellular location">
    <subcellularLocation>
        <location evidence="1">Cytoplasm</location>
    </subcellularLocation>
</comment>
<comment type="domain">
    <text evidence="1">The J domain is necessary and sufficient to stimulate DnaK ATPase activity. Zinc center 1 plays an important role in the autonomous, DnaK-independent chaperone activity of DnaJ. Zinc center 2 is essential for interaction with DnaK and for DnaJ activity.</text>
</comment>
<comment type="similarity">
    <text evidence="1">Belongs to the DnaJ family.</text>
</comment>
<name>DNAJ1_NOCFA</name>
<sequence length="384" mass="40519">MARDYYGLLGVARNATDQEIKRAYRKLARELHPDVNPDEAAQARFKEVSTAYEVLSDPEKRRIVDMGGDPLESGGGAGGFSGAGFGGLGDVFEAFFGGMSGAGGGQRKPRGRVQPGADSLLRTRLSLAECAVGVTKHLTVDTAVLCDACHGSGTHGNSKPVRCETCGGAGEVQSVQRSFLGQVLTSRPCPTCRGAGETIPDPCHKCGGDGRVRARREIAAPIPAGVANGMRVRLAAQGEVGPGGGPPGDLYVEIVEQPHDVFVRDGDDLHCTIRVPMVDAALGTTVVIDTILDGPTELTIPPGTQPGEVSVLRGHGMPKLRSGVRGDLLAHLDIVIPTKLDGKQTELLRKYKALRDRDRAEVMSAQSEHNSGLFARLRASFSGR</sequence>
<gene>
    <name evidence="1" type="primary">dnaJ1</name>
    <name type="ordered locus">NFA_14260</name>
</gene>
<dbReference type="EMBL" id="AP006618">
    <property type="protein sequence ID" value="BAD56271.1"/>
    <property type="molecule type" value="Genomic_DNA"/>
</dbReference>
<dbReference type="RefSeq" id="WP_011207956.1">
    <property type="nucleotide sequence ID" value="NC_006361.1"/>
</dbReference>
<dbReference type="SMR" id="Q5YZX0"/>
<dbReference type="STRING" id="247156.NFA_14260"/>
<dbReference type="GeneID" id="61132242"/>
<dbReference type="KEGG" id="nfa:NFA_14260"/>
<dbReference type="eggNOG" id="COG0484">
    <property type="taxonomic scope" value="Bacteria"/>
</dbReference>
<dbReference type="HOGENOM" id="CLU_017633_0_7_11"/>
<dbReference type="OrthoDB" id="9779889at2"/>
<dbReference type="Proteomes" id="UP000006820">
    <property type="component" value="Chromosome"/>
</dbReference>
<dbReference type="GO" id="GO:0005737">
    <property type="term" value="C:cytoplasm"/>
    <property type="evidence" value="ECO:0007669"/>
    <property type="project" value="UniProtKB-SubCell"/>
</dbReference>
<dbReference type="GO" id="GO:0005524">
    <property type="term" value="F:ATP binding"/>
    <property type="evidence" value="ECO:0007669"/>
    <property type="project" value="InterPro"/>
</dbReference>
<dbReference type="GO" id="GO:0031072">
    <property type="term" value="F:heat shock protein binding"/>
    <property type="evidence" value="ECO:0007669"/>
    <property type="project" value="InterPro"/>
</dbReference>
<dbReference type="GO" id="GO:0051082">
    <property type="term" value="F:unfolded protein binding"/>
    <property type="evidence" value="ECO:0007669"/>
    <property type="project" value="UniProtKB-UniRule"/>
</dbReference>
<dbReference type="GO" id="GO:0008270">
    <property type="term" value="F:zinc ion binding"/>
    <property type="evidence" value="ECO:0007669"/>
    <property type="project" value="UniProtKB-UniRule"/>
</dbReference>
<dbReference type="GO" id="GO:0051085">
    <property type="term" value="P:chaperone cofactor-dependent protein refolding"/>
    <property type="evidence" value="ECO:0007669"/>
    <property type="project" value="TreeGrafter"/>
</dbReference>
<dbReference type="GO" id="GO:0006260">
    <property type="term" value="P:DNA replication"/>
    <property type="evidence" value="ECO:0007669"/>
    <property type="project" value="UniProtKB-KW"/>
</dbReference>
<dbReference type="GO" id="GO:0042026">
    <property type="term" value="P:protein refolding"/>
    <property type="evidence" value="ECO:0007669"/>
    <property type="project" value="TreeGrafter"/>
</dbReference>
<dbReference type="GO" id="GO:0009408">
    <property type="term" value="P:response to heat"/>
    <property type="evidence" value="ECO:0007669"/>
    <property type="project" value="InterPro"/>
</dbReference>
<dbReference type="CDD" id="cd06257">
    <property type="entry name" value="DnaJ"/>
    <property type="match status" value="1"/>
</dbReference>
<dbReference type="CDD" id="cd10747">
    <property type="entry name" value="DnaJ_C"/>
    <property type="match status" value="1"/>
</dbReference>
<dbReference type="CDD" id="cd10719">
    <property type="entry name" value="DnaJ_zf"/>
    <property type="match status" value="1"/>
</dbReference>
<dbReference type="FunFam" id="2.60.260.20:FF:000005">
    <property type="entry name" value="Chaperone protein dnaJ 1, mitochondrial"/>
    <property type="match status" value="1"/>
</dbReference>
<dbReference type="FunFam" id="2.10.230.10:FF:000002">
    <property type="entry name" value="Molecular chaperone DnaJ"/>
    <property type="match status" value="1"/>
</dbReference>
<dbReference type="Gene3D" id="1.10.287.110">
    <property type="entry name" value="DnaJ domain"/>
    <property type="match status" value="1"/>
</dbReference>
<dbReference type="Gene3D" id="2.10.230.10">
    <property type="entry name" value="Heat shock protein DnaJ, cysteine-rich domain"/>
    <property type="match status" value="1"/>
</dbReference>
<dbReference type="Gene3D" id="2.60.260.20">
    <property type="entry name" value="Urease metallochaperone UreE, N-terminal domain"/>
    <property type="match status" value="2"/>
</dbReference>
<dbReference type="HAMAP" id="MF_01152">
    <property type="entry name" value="DnaJ"/>
    <property type="match status" value="1"/>
</dbReference>
<dbReference type="InterPro" id="IPR012724">
    <property type="entry name" value="DnaJ"/>
</dbReference>
<dbReference type="InterPro" id="IPR002939">
    <property type="entry name" value="DnaJ_C"/>
</dbReference>
<dbReference type="InterPro" id="IPR001623">
    <property type="entry name" value="DnaJ_domain"/>
</dbReference>
<dbReference type="InterPro" id="IPR008971">
    <property type="entry name" value="HSP40/DnaJ_pept-bd"/>
</dbReference>
<dbReference type="InterPro" id="IPR001305">
    <property type="entry name" value="HSP_DnaJ_Cys-rich_dom"/>
</dbReference>
<dbReference type="InterPro" id="IPR036410">
    <property type="entry name" value="HSP_DnaJ_Cys-rich_dom_sf"/>
</dbReference>
<dbReference type="InterPro" id="IPR036869">
    <property type="entry name" value="J_dom_sf"/>
</dbReference>
<dbReference type="NCBIfam" id="NF008035">
    <property type="entry name" value="PRK10767.1"/>
    <property type="match status" value="1"/>
</dbReference>
<dbReference type="NCBIfam" id="NF010871">
    <property type="entry name" value="PRK14278.1"/>
    <property type="match status" value="1"/>
</dbReference>
<dbReference type="PANTHER" id="PTHR43096:SF48">
    <property type="entry name" value="CHAPERONE PROTEIN DNAJ"/>
    <property type="match status" value="1"/>
</dbReference>
<dbReference type="PANTHER" id="PTHR43096">
    <property type="entry name" value="DNAJ HOMOLOG 1, MITOCHONDRIAL-RELATED"/>
    <property type="match status" value="1"/>
</dbReference>
<dbReference type="Pfam" id="PF00226">
    <property type="entry name" value="DnaJ"/>
    <property type="match status" value="1"/>
</dbReference>
<dbReference type="Pfam" id="PF01556">
    <property type="entry name" value="DnaJ_C"/>
    <property type="match status" value="1"/>
</dbReference>
<dbReference type="Pfam" id="PF00684">
    <property type="entry name" value="DnaJ_CXXCXGXG"/>
    <property type="match status" value="1"/>
</dbReference>
<dbReference type="PRINTS" id="PR00625">
    <property type="entry name" value="JDOMAIN"/>
</dbReference>
<dbReference type="SMART" id="SM00271">
    <property type="entry name" value="DnaJ"/>
    <property type="match status" value="1"/>
</dbReference>
<dbReference type="SUPFAM" id="SSF46565">
    <property type="entry name" value="Chaperone J-domain"/>
    <property type="match status" value="1"/>
</dbReference>
<dbReference type="SUPFAM" id="SSF57938">
    <property type="entry name" value="DnaJ/Hsp40 cysteine-rich domain"/>
    <property type="match status" value="1"/>
</dbReference>
<dbReference type="SUPFAM" id="SSF49493">
    <property type="entry name" value="HSP40/DnaJ peptide-binding domain"/>
    <property type="match status" value="2"/>
</dbReference>
<dbReference type="PROSITE" id="PS50076">
    <property type="entry name" value="DNAJ_2"/>
    <property type="match status" value="1"/>
</dbReference>
<dbReference type="PROSITE" id="PS51188">
    <property type="entry name" value="ZF_CR"/>
    <property type="match status" value="1"/>
</dbReference>
<reference key="1">
    <citation type="journal article" date="2004" name="Proc. Natl. Acad. Sci. U.S.A.">
        <title>The complete genomic sequence of Nocardia farcinica IFM 10152.</title>
        <authorList>
            <person name="Ishikawa J."/>
            <person name="Yamashita A."/>
            <person name="Mikami Y."/>
            <person name="Hoshino Y."/>
            <person name="Kurita H."/>
            <person name="Hotta K."/>
            <person name="Shiba T."/>
            <person name="Hattori M."/>
        </authorList>
    </citation>
    <scope>NUCLEOTIDE SEQUENCE [LARGE SCALE GENOMIC DNA]</scope>
    <source>
        <strain>IFM 10152</strain>
    </source>
</reference>
<protein>
    <recommendedName>
        <fullName evidence="1">Chaperone protein DnaJ 1</fullName>
    </recommendedName>
</protein>
<organism>
    <name type="scientific">Nocardia farcinica (strain IFM 10152)</name>
    <dbReference type="NCBI Taxonomy" id="247156"/>
    <lineage>
        <taxon>Bacteria</taxon>
        <taxon>Bacillati</taxon>
        <taxon>Actinomycetota</taxon>
        <taxon>Actinomycetes</taxon>
        <taxon>Mycobacteriales</taxon>
        <taxon>Nocardiaceae</taxon>
        <taxon>Nocardia</taxon>
    </lineage>
</organism>